<evidence type="ECO:0000250" key="1"/>
<evidence type="ECO:0000250" key="2">
    <source>
        <dbReference type="UniProtKB" id="P94522"/>
    </source>
</evidence>
<evidence type="ECO:0000255" key="3"/>
<evidence type="ECO:0000305" key="4"/>
<keyword id="KW-0119">Carbohydrate metabolism</keyword>
<keyword id="KW-0326">Glycosidase</keyword>
<keyword id="KW-0378">Hydrolase</keyword>
<keyword id="KW-0624">Polysaccharide degradation</keyword>
<keyword id="KW-1185">Reference proteome</keyword>
<keyword id="KW-0964">Secreted</keyword>
<keyword id="KW-0732">Signal</keyword>
<keyword id="KW-0858">Xylan degradation</keyword>
<dbReference type="EC" id="3.2.1.99"/>
<dbReference type="EMBL" id="DS027690">
    <property type="protein sequence ID" value="EAW21105.1"/>
    <property type="molecule type" value="Genomic_DNA"/>
</dbReference>
<dbReference type="RefSeq" id="XP_001263002.1">
    <property type="nucleotide sequence ID" value="XM_001263001.1"/>
</dbReference>
<dbReference type="SMR" id="A1D5W1"/>
<dbReference type="STRING" id="331117.A1D5W1"/>
<dbReference type="EnsemblFungi" id="EAW21105">
    <property type="protein sequence ID" value="EAW21105"/>
    <property type="gene ID" value="NFIA_062660"/>
</dbReference>
<dbReference type="GeneID" id="4589728"/>
<dbReference type="KEGG" id="nfi:NFIA_062660"/>
<dbReference type="VEuPathDB" id="FungiDB:NFIA_062660"/>
<dbReference type="eggNOG" id="ENOG502QTQG">
    <property type="taxonomic scope" value="Eukaryota"/>
</dbReference>
<dbReference type="HOGENOM" id="CLU_009397_5_0_1"/>
<dbReference type="OMA" id="GHLWAPD"/>
<dbReference type="OrthoDB" id="195678at2759"/>
<dbReference type="UniPathway" id="UPA00667"/>
<dbReference type="Proteomes" id="UP000006702">
    <property type="component" value="Unassembled WGS sequence"/>
</dbReference>
<dbReference type="GO" id="GO:0005576">
    <property type="term" value="C:extracellular region"/>
    <property type="evidence" value="ECO:0007669"/>
    <property type="project" value="UniProtKB-SubCell"/>
</dbReference>
<dbReference type="GO" id="GO:0046558">
    <property type="term" value="F:arabinan endo-1,5-alpha-L-arabinosidase activity"/>
    <property type="evidence" value="ECO:0007669"/>
    <property type="project" value="UniProtKB-EC"/>
</dbReference>
<dbReference type="GO" id="GO:0031222">
    <property type="term" value="P:arabinan catabolic process"/>
    <property type="evidence" value="ECO:0007669"/>
    <property type="project" value="UniProtKB-UniPathway"/>
</dbReference>
<dbReference type="GO" id="GO:0045493">
    <property type="term" value="P:xylan catabolic process"/>
    <property type="evidence" value="ECO:0007669"/>
    <property type="project" value="UniProtKB-KW"/>
</dbReference>
<dbReference type="CDD" id="cd18831">
    <property type="entry name" value="GH43_AnAbnA-like"/>
    <property type="match status" value="1"/>
</dbReference>
<dbReference type="FunFam" id="2.115.10.20:FF:000005">
    <property type="entry name" value="Arabinan endo-1,5-alpha-L-arabinosidase"/>
    <property type="match status" value="1"/>
</dbReference>
<dbReference type="Gene3D" id="2.115.10.20">
    <property type="entry name" value="Glycosyl hydrolase domain, family 43"/>
    <property type="match status" value="1"/>
</dbReference>
<dbReference type="InterPro" id="IPR050727">
    <property type="entry name" value="GH43_arabinanases"/>
</dbReference>
<dbReference type="InterPro" id="IPR006710">
    <property type="entry name" value="Glyco_hydro_43"/>
</dbReference>
<dbReference type="InterPro" id="IPR016840">
    <property type="entry name" value="Glyco_hydro_43_endo_a_Ara-ase"/>
</dbReference>
<dbReference type="InterPro" id="IPR023296">
    <property type="entry name" value="Glyco_hydro_beta-prop_sf"/>
</dbReference>
<dbReference type="PANTHER" id="PTHR43301">
    <property type="entry name" value="ARABINAN ENDO-1,5-ALPHA-L-ARABINOSIDASE"/>
    <property type="match status" value="1"/>
</dbReference>
<dbReference type="PANTHER" id="PTHR43301:SF3">
    <property type="entry name" value="ARABINAN ENDO-1,5-ALPHA-L-ARABINOSIDASE A-RELATED"/>
    <property type="match status" value="1"/>
</dbReference>
<dbReference type="Pfam" id="PF04616">
    <property type="entry name" value="Glyco_hydro_43"/>
    <property type="match status" value="1"/>
</dbReference>
<dbReference type="PIRSF" id="PIRSF026534">
    <property type="entry name" value="Endo_alpha-L-arabinosidase"/>
    <property type="match status" value="1"/>
</dbReference>
<dbReference type="SUPFAM" id="SSF75005">
    <property type="entry name" value="Arabinanase/levansucrase/invertase"/>
    <property type="match status" value="1"/>
</dbReference>
<reference key="1">
    <citation type="journal article" date="2008" name="PLoS Genet.">
        <title>Genomic islands in the pathogenic filamentous fungus Aspergillus fumigatus.</title>
        <authorList>
            <person name="Fedorova N.D."/>
            <person name="Khaldi N."/>
            <person name="Joardar V.S."/>
            <person name="Maiti R."/>
            <person name="Amedeo P."/>
            <person name="Anderson M.J."/>
            <person name="Crabtree J."/>
            <person name="Silva J.C."/>
            <person name="Badger J.H."/>
            <person name="Albarraq A."/>
            <person name="Angiuoli S."/>
            <person name="Bussey H."/>
            <person name="Bowyer P."/>
            <person name="Cotty P.J."/>
            <person name="Dyer P.S."/>
            <person name="Egan A."/>
            <person name="Galens K."/>
            <person name="Fraser-Liggett C.M."/>
            <person name="Haas B.J."/>
            <person name="Inman J.M."/>
            <person name="Kent R."/>
            <person name="Lemieux S."/>
            <person name="Malavazi I."/>
            <person name="Orvis J."/>
            <person name="Roemer T."/>
            <person name="Ronning C.M."/>
            <person name="Sundaram J.P."/>
            <person name="Sutton G."/>
            <person name="Turner G."/>
            <person name="Venter J.C."/>
            <person name="White O.R."/>
            <person name="Whitty B.R."/>
            <person name="Youngman P."/>
            <person name="Wolfe K.H."/>
            <person name="Goldman G.H."/>
            <person name="Wortman J.R."/>
            <person name="Jiang B."/>
            <person name="Denning D.W."/>
            <person name="Nierman W.C."/>
        </authorList>
    </citation>
    <scope>NUCLEOTIDE SEQUENCE [LARGE SCALE GENOMIC DNA]</scope>
    <source>
        <strain>ATCC 1020 / DSM 3700 / CBS 544.65 / FGSC A1164 / JCM 1740 / NRRL 181 / WB 181</strain>
    </source>
</reference>
<protein>
    <recommendedName>
        <fullName>Probable arabinan endo-1,5-alpha-L-arabinosidase A</fullName>
        <ecNumber>3.2.1.99</ecNumber>
    </recommendedName>
    <alternativeName>
        <fullName>Endo-1,5-alpha-L-arabinanase A</fullName>
        <shortName>ABN A</shortName>
    </alternativeName>
</protein>
<gene>
    <name type="primary">abnA</name>
    <name type="ORF">NFIA_062660</name>
</gene>
<sequence>MSASAFVAVASCLAALVHGYANPGSCSGACNVHDPALIRRQSDGKYFRFSTGNKISYASSSSIQGPWTVLGSVLPSGSSINLDGKDDLWAPDVSLVNGVYHVYYSVSTFGSQSSAIGLATSSTMDLNSWTDHGSTGIQSSSSKPYNAIDANLFNDGGTYYMNFGSFWHDIYQAPMNSAATAAASSSYNIAYNPSGTHAVEGAFMYKYGSYYYLFFSAGICCGYDTSRPASGEEYKIKVCRSTSATGNFVDASGVACTNGGGTVVLESHGTVYGPGGQGVFTDPSLGPILYYHYVDTTIGYADGQKLFGWNKIDFSSGWPVV</sequence>
<organism>
    <name type="scientific">Neosartorya fischeri (strain ATCC 1020 / DSM 3700 / CBS 544.65 / FGSC A1164 / JCM 1740 / NRRL 181 / WB 181)</name>
    <name type="common">Aspergillus fischerianus</name>
    <dbReference type="NCBI Taxonomy" id="331117"/>
    <lineage>
        <taxon>Eukaryota</taxon>
        <taxon>Fungi</taxon>
        <taxon>Dikarya</taxon>
        <taxon>Ascomycota</taxon>
        <taxon>Pezizomycotina</taxon>
        <taxon>Eurotiomycetes</taxon>
        <taxon>Eurotiomycetidae</taxon>
        <taxon>Eurotiales</taxon>
        <taxon>Aspergillaceae</taxon>
        <taxon>Aspergillus</taxon>
        <taxon>Aspergillus subgen. Fumigati</taxon>
    </lineage>
</organism>
<proteinExistence type="inferred from homology"/>
<name>ABNA_NEOFI</name>
<comment type="function">
    <text evidence="1">Endo-1,5-alpha-L-arabinanase involved in degradation of pectin. Its preferred substrate is linear 1,5-alpha-L-arabinan (By similarity).</text>
</comment>
<comment type="catalytic activity">
    <reaction>
        <text>Endohydrolysis of (1-&gt;5)-alpha-arabinofuranosidic linkages in (1-&gt;5)-arabinans.</text>
        <dbReference type="EC" id="3.2.1.99"/>
    </reaction>
</comment>
<comment type="pathway">
    <text>Glycan metabolism; L-arabinan degradation.</text>
</comment>
<comment type="subcellular location">
    <subcellularLocation>
        <location evidence="1">Secreted</location>
    </subcellularLocation>
</comment>
<comment type="similarity">
    <text evidence="4">Belongs to the glycosyl hydrolase 43 family.</text>
</comment>
<feature type="signal peptide" evidence="3">
    <location>
        <begin position="1"/>
        <end position="19"/>
    </location>
</feature>
<feature type="chain" id="PRO_0000394624" description="Probable arabinan endo-1,5-alpha-L-arabinosidase A">
    <location>
        <begin position="20"/>
        <end position="321"/>
    </location>
</feature>
<feature type="active site" description="Proton acceptor" evidence="2">
    <location>
        <position position="34"/>
    </location>
</feature>
<feature type="active site" description="Proton donor" evidence="2">
    <location>
        <position position="200"/>
    </location>
</feature>
<feature type="site" description="Important for catalytic activity, responsible for pKa modulation of the active site Glu and correct orientation of both the proton donor and substrate" evidence="2">
    <location>
        <position position="149"/>
    </location>
</feature>
<accession>A1D5W1</accession>